<organism>
    <name type="scientific">Burkholderia multivorans (strain ATCC 17616 / 249)</name>
    <dbReference type="NCBI Taxonomy" id="395019"/>
    <lineage>
        <taxon>Bacteria</taxon>
        <taxon>Pseudomonadati</taxon>
        <taxon>Pseudomonadota</taxon>
        <taxon>Betaproteobacteria</taxon>
        <taxon>Burkholderiales</taxon>
        <taxon>Burkholderiaceae</taxon>
        <taxon>Burkholderia</taxon>
        <taxon>Burkholderia cepacia complex</taxon>
    </lineage>
</organism>
<accession>A9ADK1</accession>
<sequence length="64" mass="7312">MKASELLQKDQAALNKELADLLKAQFGLRMQLATQQLTNTSQLKKVRRDIARVRTVMTQKANQK</sequence>
<proteinExistence type="inferred from homology"/>
<comment type="similarity">
    <text evidence="1">Belongs to the universal ribosomal protein uL29 family.</text>
</comment>
<feature type="chain" id="PRO_1000121742" description="Large ribosomal subunit protein uL29">
    <location>
        <begin position="1"/>
        <end position="64"/>
    </location>
</feature>
<dbReference type="EMBL" id="CP000868">
    <property type="protein sequence ID" value="ABX13952.1"/>
    <property type="molecule type" value="Genomic_DNA"/>
</dbReference>
<dbReference type="EMBL" id="AP009385">
    <property type="protein sequence ID" value="BAG44882.1"/>
    <property type="molecule type" value="Genomic_DNA"/>
</dbReference>
<dbReference type="RefSeq" id="WP_006400652.1">
    <property type="nucleotide sequence ID" value="NC_010804.1"/>
</dbReference>
<dbReference type="SMR" id="A9ADK1"/>
<dbReference type="STRING" id="395019.BMULJ_02997"/>
<dbReference type="GeneID" id="98107152"/>
<dbReference type="KEGG" id="bmj:BMULJ_02997"/>
<dbReference type="KEGG" id="bmu:Bmul_0257"/>
<dbReference type="eggNOG" id="COG0255">
    <property type="taxonomic scope" value="Bacteria"/>
</dbReference>
<dbReference type="HOGENOM" id="CLU_158491_1_1_4"/>
<dbReference type="Proteomes" id="UP000008815">
    <property type="component" value="Chromosome 1"/>
</dbReference>
<dbReference type="GO" id="GO:0022625">
    <property type="term" value="C:cytosolic large ribosomal subunit"/>
    <property type="evidence" value="ECO:0007669"/>
    <property type="project" value="TreeGrafter"/>
</dbReference>
<dbReference type="GO" id="GO:0003735">
    <property type="term" value="F:structural constituent of ribosome"/>
    <property type="evidence" value="ECO:0007669"/>
    <property type="project" value="InterPro"/>
</dbReference>
<dbReference type="GO" id="GO:0006412">
    <property type="term" value="P:translation"/>
    <property type="evidence" value="ECO:0007669"/>
    <property type="project" value="UniProtKB-UniRule"/>
</dbReference>
<dbReference type="CDD" id="cd00427">
    <property type="entry name" value="Ribosomal_L29_HIP"/>
    <property type="match status" value="1"/>
</dbReference>
<dbReference type="FunFam" id="1.10.287.310:FF:000001">
    <property type="entry name" value="50S ribosomal protein L29"/>
    <property type="match status" value="1"/>
</dbReference>
<dbReference type="Gene3D" id="6.10.140.1970">
    <property type="match status" value="1"/>
</dbReference>
<dbReference type="HAMAP" id="MF_00374">
    <property type="entry name" value="Ribosomal_uL29"/>
    <property type="match status" value="1"/>
</dbReference>
<dbReference type="InterPro" id="IPR050063">
    <property type="entry name" value="Ribosomal_protein_uL29"/>
</dbReference>
<dbReference type="InterPro" id="IPR001854">
    <property type="entry name" value="Ribosomal_uL29"/>
</dbReference>
<dbReference type="InterPro" id="IPR018254">
    <property type="entry name" value="Ribosomal_uL29_CS"/>
</dbReference>
<dbReference type="InterPro" id="IPR036049">
    <property type="entry name" value="Ribosomal_uL29_sf"/>
</dbReference>
<dbReference type="NCBIfam" id="TIGR00012">
    <property type="entry name" value="L29"/>
    <property type="match status" value="1"/>
</dbReference>
<dbReference type="PANTHER" id="PTHR10916">
    <property type="entry name" value="60S RIBOSOMAL PROTEIN L35/50S RIBOSOMAL PROTEIN L29"/>
    <property type="match status" value="1"/>
</dbReference>
<dbReference type="PANTHER" id="PTHR10916:SF0">
    <property type="entry name" value="LARGE RIBOSOMAL SUBUNIT PROTEIN UL29C"/>
    <property type="match status" value="1"/>
</dbReference>
<dbReference type="Pfam" id="PF00831">
    <property type="entry name" value="Ribosomal_L29"/>
    <property type="match status" value="1"/>
</dbReference>
<dbReference type="SUPFAM" id="SSF46561">
    <property type="entry name" value="Ribosomal protein L29 (L29p)"/>
    <property type="match status" value="1"/>
</dbReference>
<dbReference type="PROSITE" id="PS00579">
    <property type="entry name" value="RIBOSOMAL_L29"/>
    <property type="match status" value="1"/>
</dbReference>
<gene>
    <name evidence="1" type="primary">rpmC</name>
    <name type="ordered locus">Bmul_0257</name>
    <name type="ordered locus">BMULJ_02997</name>
</gene>
<name>RL29_BURM1</name>
<evidence type="ECO:0000255" key="1">
    <source>
        <dbReference type="HAMAP-Rule" id="MF_00374"/>
    </source>
</evidence>
<evidence type="ECO:0000305" key="2"/>
<reference key="1">
    <citation type="submission" date="2007-10" db="EMBL/GenBank/DDBJ databases">
        <title>Complete sequence of chromosome 1 of Burkholderia multivorans ATCC 17616.</title>
        <authorList>
            <person name="Copeland A."/>
            <person name="Lucas S."/>
            <person name="Lapidus A."/>
            <person name="Barry K."/>
            <person name="Glavina del Rio T."/>
            <person name="Dalin E."/>
            <person name="Tice H."/>
            <person name="Pitluck S."/>
            <person name="Chain P."/>
            <person name="Malfatti S."/>
            <person name="Shin M."/>
            <person name="Vergez L."/>
            <person name="Schmutz J."/>
            <person name="Larimer F."/>
            <person name="Land M."/>
            <person name="Hauser L."/>
            <person name="Kyrpides N."/>
            <person name="Kim E."/>
            <person name="Tiedje J."/>
            <person name="Richardson P."/>
        </authorList>
    </citation>
    <scope>NUCLEOTIDE SEQUENCE [LARGE SCALE GENOMIC DNA]</scope>
    <source>
        <strain>ATCC 17616 / 249</strain>
    </source>
</reference>
<reference key="2">
    <citation type="submission" date="2007-04" db="EMBL/GenBank/DDBJ databases">
        <title>Complete genome sequence of Burkholderia multivorans ATCC 17616.</title>
        <authorList>
            <person name="Ohtsubo Y."/>
            <person name="Yamashita A."/>
            <person name="Kurokawa K."/>
            <person name="Takami H."/>
            <person name="Yuhara S."/>
            <person name="Nishiyama E."/>
            <person name="Endo R."/>
            <person name="Miyazaki R."/>
            <person name="Ono A."/>
            <person name="Yano K."/>
            <person name="Ito M."/>
            <person name="Sota M."/>
            <person name="Yuji N."/>
            <person name="Hattori M."/>
            <person name="Tsuda M."/>
        </authorList>
    </citation>
    <scope>NUCLEOTIDE SEQUENCE [LARGE SCALE GENOMIC DNA]</scope>
    <source>
        <strain>ATCC 17616 / 249</strain>
    </source>
</reference>
<protein>
    <recommendedName>
        <fullName evidence="1">Large ribosomal subunit protein uL29</fullName>
    </recommendedName>
    <alternativeName>
        <fullName evidence="2">50S ribosomal protein L29</fullName>
    </alternativeName>
</protein>
<keyword id="KW-1185">Reference proteome</keyword>
<keyword id="KW-0687">Ribonucleoprotein</keyword>
<keyword id="KW-0689">Ribosomal protein</keyword>